<reference key="1">
    <citation type="journal article" date="2005" name="Nature">
        <title>The map-based sequence of the rice genome.</title>
        <authorList>
            <consortium name="International rice genome sequencing project (IRGSP)"/>
        </authorList>
    </citation>
    <scope>NUCLEOTIDE SEQUENCE [LARGE SCALE GENOMIC DNA]</scope>
    <source>
        <strain>cv. Nipponbare</strain>
    </source>
</reference>
<reference key="2">
    <citation type="journal article" date="2013" name="Rice">
        <title>Improvement of the Oryza sativa Nipponbare reference genome using next generation sequence and optical map data.</title>
        <authorList>
            <person name="Kawahara Y."/>
            <person name="de la Bastide M."/>
            <person name="Hamilton J.P."/>
            <person name="Kanamori H."/>
            <person name="McCombie W.R."/>
            <person name="Ouyang S."/>
            <person name="Schwartz D.C."/>
            <person name="Tanaka T."/>
            <person name="Wu J."/>
            <person name="Zhou S."/>
            <person name="Childs K.L."/>
            <person name="Davidson R.M."/>
            <person name="Lin H."/>
            <person name="Quesada-Ocampo L."/>
            <person name="Vaillancourt B."/>
            <person name="Sakai H."/>
            <person name="Lee S.S."/>
            <person name="Kim J."/>
            <person name="Numa H."/>
            <person name="Itoh T."/>
            <person name="Buell C.R."/>
            <person name="Matsumoto T."/>
        </authorList>
    </citation>
    <scope>GENOME REANNOTATION</scope>
    <source>
        <strain>cv. Nipponbare</strain>
    </source>
</reference>
<evidence type="ECO:0000255" key="1">
    <source>
        <dbReference type="PROSITE-ProRule" id="PRU00326"/>
    </source>
</evidence>
<evidence type="ECO:0000256" key="2">
    <source>
        <dbReference type="SAM" id="MobiDB-lite"/>
    </source>
</evidence>
<proteinExistence type="inferred from homology"/>
<accession>Q6YTQ4</accession>
<accession>A0A0P0XES8</accession>
<organism>
    <name type="scientific">Oryza sativa subsp. japonica</name>
    <name type="common">Rice</name>
    <dbReference type="NCBI Taxonomy" id="39947"/>
    <lineage>
        <taxon>Eukaryota</taxon>
        <taxon>Viridiplantae</taxon>
        <taxon>Streptophyta</taxon>
        <taxon>Embryophyta</taxon>
        <taxon>Tracheophyta</taxon>
        <taxon>Spermatophyta</taxon>
        <taxon>Magnoliopsida</taxon>
        <taxon>Liliopsida</taxon>
        <taxon>Poales</taxon>
        <taxon>Poaceae</taxon>
        <taxon>BOP clade</taxon>
        <taxon>Oryzoideae</taxon>
        <taxon>Oryzeae</taxon>
        <taxon>Oryzinae</taxon>
        <taxon>Oryza</taxon>
        <taxon>Oryza sativa</taxon>
    </lineage>
</organism>
<comment type="subcellular location">
    <subcellularLocation>
        <location evidence="1">Nucleus</location>
    </subcellularLocation>
</comment>
<protein>
    <recommendedName>
        <fullName>Putative B3 domain-containing protein Os08g0333500</fullName>
    </recommendedName>
</protein>
<feature type="chain" id="PRO_0000376981" description="Putative B3 domain-containing protein Os08g0333500">
    <location>
        <begin position="1"/>
        <end position="421"/>
    </location>
</feature>
<feature type="DNA-binding region" description="TF-B3" evidence="1">
    <location>
        <begin position="1"/>
        <end position="51"/>
    </location>
</feature>
<feature type="region of interest" description="Disordered" evidence="2">
    <location>
        <begin position="92"/>
        <end position="121"/>
    </location>
</feature>
<feature type="compositionally biased region" description="Basic and acidic residues" evidence="2">
    <location>
        <begin position="95"/>
        <end position="107"/>
    </location>
</feature>
<feature type="compositionally biased region" description="Polar residues" evidence="2">
    <location>
        <begin position="108"/>
        <end position="121"/>
    </location>
</feature>
<gene>
    <name type="ordered locus">Os08g0333500</name>
    <name type="ordered locus">LOC_Os08g24470</name>
    <name type="ORF">OSJNBa0030G18.13</name>
</gene>
<name>Y8335_ORYSJ</name>
<sequence length="421" mass="46734">MTVELEKIAGSFFISKGWKTFVHRTGLLSGQYIRFQVLTPSKINVLLFDKKKDSKLPMIPSSKKQIKTAPKRSTGITINDMPTSKHASMLISHTSNKETSSDSRTESMTDIPSSSDNSGETTRSFDDLCFCARNTAVTPDIKNYISIIGQFLQRSSKFYIVTMNNTFMKQDRLCKLSLLTNMLMCDVLTDTCRFTLPSFLMAFFQNTVQTQTLTTCADSPYPYEHLRKTEPACREIDEVTLTMCAHSPYPYEYLRKTELACREIDEVTTGASLSTNILPPYTSSPLEAISGGEDIWWLAASRMGWRGDVAAVQADSVDGNNSPFLCARSPTIGNGGADQPYLMVGKPHGWPCWGWDGAEMWLWCQSKNSGHCHIGWPVGVLVKGGRIYPGGGLPSKELAGMIGPYASGDWFELKRELPAKA</sequence>
<keyword id="KW-0238">DNA-binding</keyword>
<keyword id="KW-0539">Nucleus</keyword>
<keyword id="KW-1185">Reference proteome</keyword>
<keyword id="KW-0804">Transcription</keyword>
<keyword id="KW-0805">Transcription regulation</keyword>
<dbReference type="EMBL" id="AP005925">
    <property type="protein sequence ID" value="BAD03912.1"/>
    <property type="molecule type" value="Genomic_DNA"/>
</dbReference>
<dbReference type="EMBL" id="AP014964">
    <property type="protein sequence ID" value="BAT04951.1"/>
    <property type="molecule type" value="Genomic_DNA"/>
</dbReference>
<dbReference type="PaxDb" id="39947-Q6YTQ4"/>
<dbReference type="EnsemblPlants" id="Os08t0333500-00">
    <property type="protein sequence ID" value="Os08t0333500-00"/>
    <property type="gene ID" value="Os08g0333500"/>
</dbReference>
<dbReference type="Gramene" id="Os08t0333500-00">
    <property type="protein sequence ID" value="Os08t0333500-00"/>
    <property type="gene ID" value="Os08g0333500"/>
</dbReference>
<dbReference type="HOGENOM" id="CLU_652815_0_0_1"/>
<dbReference type="InParanoid" id="Q6YTQ4"/>
<dbReference type="Proteomes" id="UP000000763">
    <property type="component" value="Chromosome 8"/>
</dbReference>
<dbReference type="Proteomes" id="UP000059680">
    <property type="component" value="Chromosome 8"/>
</dbReference>
<dbReference type="GO" id="GO:0005634">
    <property type="term" value="C:nucleus"/>
    <property type="evidence" value="ECO:0007669"/>
    <property type="project" value="UniProtKB-SubCell"/>
</dbReference>
<dbReference type="GO" id="GO:0003677">
    <property type="term" value="F:DNA binding"/>
    <property type="evidence" value="ECO:0007669"/>
    <property type="project" value="UniProtKB-KW"/>
</dbReference>
<dbReference type="InterPro" id="IPR003340">
    <property type="entry name" value="B3_DNA-bd"/>
</dbReference>
<dbReference type="InterPro" id="IPR015300">
    <property type="entry name" value="DNA-bd_pseudobarrel_sf"/>
</dbReference>
<dbReference type="SUPFAM" id="SSF101936">
    <property type="entry name" value="DNA-binding pseudobarrel domain"/>
    <property type="match status" value="1"/>
</dbReference>
<dbReference type="PROSITE" id="PS50863">
    <property type="entry name" value="B3"/>
    <property type="match status" value="1"/>
</dbReference>